<dbReference type="EC" id="3.6.5.n1" evidence="1"/>
<dbReference type="EMBL" id="BX897700">
    <property type="protein sequence ID" value="CAF25571.1"/>
    <property type="molecule type" value="Genomic_DNA"/>
</dbReference>
<dbReference type="RefSeq" id="WP_011178898.1">
    <property type="nucleotide sequence ID" value="NC_005955.1"/>
</dbReference>
<dbReference type="SMR" id="Q6G1F5"/>
<dbReference type="KEGG" id="bqu:BQ00640"/>
<dbReference type="eggNOG" id="COG0481">
    <property type="taxonomic scope" value="Bacteria"/>
</dbReference>
<dbReference type="HOGENOM" id="CLU_009995_3_3_5"/>
<dbReference type="OrthoDB" id="9802948at2"/>
<dbReference type="Proteomes" id="UP000000597">
    <property type="component" value="Chromosome"/>
</dbReference>
<dbReference type="GO" id="GO:0005886">
    <property type="term" value="C:plasma membrane"/>
    <property type="evidence" value="ECO:0007669"/>
    <property type="project" value="UniProtKB-SubCell"/>
</dbReference>
<dbReference type="GO" id="GO:0005525">
    <property type="term" value="F:GTP binding"/>
    <property type="evidence" value="ECO:0007669"/>
    <property type="project" value="UniProtKB-UniRule"/>
</dbReference>
<dbReference type="GO" id="GO:0003924">
    <property type="term" value="F:GTPase activity"/>
    <property type="evidence" value="ECO:0007669"/>
    <property type="project" value="UniProtKB-UniRule"/>
</dbReference>
<dbReference type="GO" id="GO:0097216">
    <property type="term" value="F:guanosine tetraphosphate binding"/>
    <property type="evidence" value="ECO:0007669"/>
    <property type="project" value="UniProtKB-ARBA"/>
</dbReference>
<dbReference type="GO" id="GO:0043022">
    <property type="term" value="F:ribosome binding"/>
    <property type="evidence" value="ECO:0007669"/>
    <property type="project" value="UniProtKB-UniRule"/>
</dbReference>
<dbReference type="GO" id="GO:0003746">
    <property type="term" value="F:translation elongation factor activity"/>
    <property type="evidence" value="ECO:0007669"/>
    <property type="project" value="UniProtKB-UniRule"/>
</dbReference>
<dbReference type="GO" id="GO:0045727">
    <property type="term" value="P:positive regulation of translation"/>
    <property type="evidence" value="ECO:0007669"/>
    <property type="project" value="UniProtKB-UniRule"/>
</dbReference>
<dbReference type="CDD" id="cd03699">
    <property type="entry name" value="EF4_II"/>
    <property type="match status" value="1"/>
</dbReference>
<dbReference type="CDD" id="cd16260">
    <property type="entry name" value="EF4_III"/>
    <property type="match status" value="1"/>
</dbReference>
<dbReference type="CDD" id="cd01890">
    <property type="entry name" value="LepA"/>
    <property type="match status" value="1"/>
</dbReference>
<dbReference type="CDD" id="cd03709">
    <property type="entry name" value="lepA_C"/>
    <property type="match status" value="1"/>
</dbReference>
<dbReference type="FunFam" id="3.40.50.300:FF:000078">
    <property type="entry name" value="Elongation factor 4"/>
    <property type="match status" value="1"/>
</dbReference>
<dbReference type="FunFam" id="2.40.30.10:FF:000015">
    <property type="entry name" value="Translation factor GUF1, mitochondrial"/>
    <property type="match status" value="1"/>
</dbReference>
<dbReference type="FunFam" id="3.30.70.240:FF:000007">
    <property type="entry name" value="Translation factor GUF1, mitochondrial"/>
    <property type="match status" value="1"/>
</dbReference>
<dbReference type="FunFam" id="3.30.70.2570:FF:000001">
    <property type="entry name" value="Translation factor GUF1, mitochondrial"/>
    <property type="match status" value="1"/>
</dbReference>
<dbReference type="FunFam" id="3.30.70.870:FF:000004">
    <property type="entry name" value="Translation factor GUF1, mitochondrial"/>
    <property type="match status" value="1"/>
</dbReference>
<dbReference type="Gene3D" id="3.30.70.240">
    <property type="match status" value="1"/>
</dbReference>
<dbReference type="Gene3D" id="3.30.70.2570">
    <property type="entry name" value="Elongation factor 4, C-terminal domain"/>
    <property type="match status" value="1"/>
</dbReference>
<dbReference type="Gene3D" id="3.30.70.870">
    <property type="entry name" value="Elongation Factor G (Translational Gtpase), domain 3"/>
    <property type="match status" value="1"/>
</dbReference>
<dbReference type="Gene3D" id="3.40.50.300">
    <property type="entry name" value="P-loop containing nucleotide triphosphate hydrolases"/>
    <property type="match status" value="1"/>
</dbReference>
<dbReference type="Gene3D" id="2.40.30.10">
    <property type="entry name" value="Translation factors"/>
    <property type="match status" value="1"/>
</dbReference>
<dbReference type="HAMAP" id="MF_00071">
    <property type="entry name" value="LepA"/>
    <property type="match status" value="1"/>
</dbReference>
<dbReference type="InterPro" id="IPR006297">
    <property type="entry name" value="EF-4"/>
</dbReference>
<dbReference type="InterPro" id="IPR035647">
    <property type="entry name" value="EFG_III/V"/>
</dbReference>
<dbReference type="InterPro" id="IPR000640">
    <property type="entry name" value="EFG_V-like"/>
</dbReference>
<dbReference type="InterPro" id="IPR004161">
    <property type="entry name" value="EFTu-like_2"/>
</dbReference>
<dbReference type="InterPro" id="IPR031157">
    <property type="entry name" value="G_TR_CS"/>
</dbReference>
<dbReference type="InterPro" id="IPR038363">
    <property type="entry name" value="LepA_C_sf"/>
</dbReference>
<dbReference type="InterPro" id="IPR013842">
    <property type="entry name" value="LepA_CTD"/>
</dbReference>
<dbReference type="InterPro" id="IPR035654">
    <property type="entry name" value="LepA_IV"/>
</dbReference>
<dbReference type="InterPro" id="IPR027417">
    <property type="entry name" value="P-loop_NTPase"/>
</dbReference>
<dbReference type="InterPro" id="IPR005225">
    <property type="entry name" value="Small_GTP-bd"/>
</dbReference>
<dbReference type="InterPro" id="IPR000795">
    <property type="entry name" value="T_Tr_GTP-bd_dom"/>
</dbReference>
<dbReference type="NCBIfam" id="TIGR01393">
    <property type="entry name" value="lepA"/>
    <property type="match status" value="1"/>
</dbReference>
<dbReference type="NCBIfam" id="TIGR00231">
    <property type="entry name" value="small_GTP"/>
    <property type="match status" value="1"/>
</dbReference>
<dbReference type="PANTHER" id="PTHR43512:SF4">
    <property type="entry name" value="TRANSLATION FACTOR GUF1 HOMOLOG, CHLOROPLASTIC"/>
    <property type="match status" value="1"/>
</dbReference>
<dbReference type="PANTHER" id="PTHR43512">
    <property type="entry name" value="TRANSLATION FACTOR GUF1-RELATED"/>
    <property type="match status" value="1"/>
</dbReference>
<dbReference type="Pfam" id="PF00679">
    <property type="entry name" value="EFG_C"/>
    <property type="match status" value="1"/>
</dbReference>
<dbReference type="Pfam" id="PF00009">
    <property type="entry name" value="GTP_EFTU"/>
    <property type="match status" value="1"/>
</dbReference>
<dbReference type="Pfam" id="PF03144">
    <property type="entry name" value="GTP_EFTU_D2"/>
    <property type="match status" value="1"/>
</dbReference>
<dbReference type="Pfam" id="PF06421">
    <property type="entry name" value="LepA_C"/>
    <property type="match status" value="1"/>
</dbReference>
<dbReference type="PRINTS" id="PR00315">
    <property type="entry name" value="ELONGATNFCT"/>
</dbReference>
<dbReference type="SMART" id="SM00838">
    <property type="entry name" value="EFG_C"/>
    <property type="match status" value="1"/>
</dbReference>
<dbReference type="SUPFAM" id="SSF54980">
    <property type="entry name" value="EF-G C-terminal domain-like"/>
    <property type="match status" value="2"/>
</dbReference>
<dbReference type="SUPFAM" id="SSF52540">
    <property type="entry name" value="P-loop containing nucleoside triphosphate hydrolases"/>
    <property type="match status" value="1"/>
</dbReference>
<dbReference type="PROSITE" id="PS00301">
    <property type="entry name" value="G_TR_1"/>
    <property type="match status" value="1"/>
</dbReference>
<dbReference type="PROSITE" id="PS51722">
    <property type="entry name" value="G_TR_2"/>
    <property type="match status" value="1"/>
</dbReference>
<name>LEPA_BARQU</name>
<protein>
    <recommendedName>
        <fullName evidence="1">Elongation factor 4</fullName>
        <shortName evidence="1">EF-4</shortName>
        <ecNumber evidence="1">3.6.5.n1</ecNumber>
    </recommendedName>
    <alternativeName>
        <fullName evidence="1">Ribosomal back-translocase LepA</fullName>
    </alternativeName>
</protein>
<accession>Q6G1F5</accession>
<keyword id="KW-0997">Cell inner membrane</keyword>
<keyword id="KW-1003">Cell membrane</keyword>
<keyword id="KW-0342">GTP-binding</keyword>
<keyword id="KW-0378">Hydrolase</keyword>
<keyword id="KW-0472">Membrane</keyword>
<keyword id="KW-0547">Nucleotide-binding</keyword>
<keyword id="KW-0648">Protein biosynthesis</keyword>
<feature type="chain" id="PRO_0000176235" description="Elongation factor 4">
    <location>
        <begin position="1"/>
        <end position="601"/>
    </location>
</feature>
<feature type="domain" description="tr-type G">
    <location>
        <begin position="6"/>
        <end position="188"/>
    </location>
</feature>
<feature type="binding site" evidence="1">
    <location>
        <begin position="18"/>
        <end position="23"/>
    </location>
    <ligand>
        <name>GTP</name>
        <dbReference type="ChEBI" id="CHEBI:37565"/>
    </ligand>
</feature>
<feature type="binding site" evidence="1">
    <location>
        <begin position="135"/>
        <end position="138"/>
    </location>
    <ligand>
        <name>GTP</name>
        <dbReference type="ChEBI" id="CHEBI:37565"/>
    </ligand>
</feature>
<reference key="1">
    <citation type="journal article" date="2004" name="Proc. Natl. Acad. Sci. U.S.A.">
        <title>The louse-borne human pathogen Bartonella quintana is a genomic derivative of the zoonotic agent Bartonella henselae.</title>
        <authorList>
            <person name="Alsmark U.C.M."/>
            <person name="Frank A.C."/>
            <person name="Karlberg E.O."/>
            <person name="Legault B.-A."/>
            <person name="Ardell D.H."/>
            <person name="Canbaeck B."/>
            <person name="Eriksson A.-S."/>
            <person name="Naeslund A.K."/>
            <person name="Handley S.A."/>
            <person name="Huvet M."/>
            <person name="La Scola B."/>
            <person name="Holmberg M."/>
            <person name="Andersson S.G.E."/>
        </authorList>
    </citation>
    <scope>NUCLEOTIDE SEQUENCE [LARGE SCALE GENOMIC DNA]</scope>
    <source>
        <strain>Toulouse</strain>
    </source>
</reference>
<gene>
    <name evidence="1" type="primary">lepA</name>
    <name type="ordered locus">BQ00640</name>
</gene>
<evidence type="ECO:0000255" key="1">
    <source>
        <dbReference type="HAMAP-Rule" id="MF_00071"/>
    </source>
</evidence>
<comment type="function">
    <text evidence="1">Required for accurate and efficient protein synthesis under certain stress conditions. May act as a fidelity factor of the translation reaction, by catalyzing a one-codon backward translocation of tRNAs on improperly translocated ribosomes. Back-translocation proceeds from a post-translocation (POST) complex to a pre-translocation (PRE) complex, thus giving elongation factor G a second chance to translocate the tRNAs correctly. Binds to ribosomes in a GTP-dependent manner.</text>
</comment>
<comment type="catalytic activity">
    <reaction evidence="1">
        <text>GTP + H2O = GDP + phosphate + H(+)</text>
        <dbReference type="Rhea" id="RHEA:19669"/>
        <dbReference type="ChEBI" id="CHEBI:15377"/>
        <dbReference type="ChEBI" id="CHEBI:15378"/>
        <dbReference type="ChEBI" id="CHEBI:37565"/>
        <dbReference type="ChEBI" id="CHEBI:43474"/>
        <dbReference type="ChEBI" id="CHEBI:58189"/>
        <dbReference type="EC" id="3.6.5.n1"/>
    </reaction>
</comment>
<comment type="subcellular location">
    <subcellularLocation>
        <location evidence="1">Cell inner membrane</location>
        <topology evidence="1">Peripheral membrane protein</topology>
        <orientation evidence="1">Cytoplasmic side</orientation>
    </subcellularLocation>
</comment>
<comment type="similarity">
    <text evidence="1">Belongs to the TRAFAC class translation factor GTPase superfamily. Classic translation factor GTPase family. LepA subfamily.</text>
</comment>
<organism>
    <name type="scientific">Bartonella quintana (strain Toulouse)</name>
    <name type="common">Rochalimaea quintana</name>
    <dbReference type="NCBI Taxonomy" id="283165"/>
    <lineage>
        <taxon>Bacteria</taxon>
        <taxon>Pseudomonadati</taxon>
        <taxon>Pseudomonadota</taxon>
        <taxon>Alphaproteobacteria</taxon>
        <taxon>Hyphomicrobiales</taxon>
        <taxon>Bartonellaceae</taxon>
        <taxon>Bartonella</taxon>
    </lineage>
</organism>
<sequence length="601" mass="66907">MTVDRNYIRNFSIVAHIDHGKSTLADRLIQMTGGLETREMKEQVLDSMDIERERGITIKAQTVRLHYKAKNGETYILNLIDTPGHVDFAYEVSRSLAACEGSLLVVDASQGVEAQTLANVYQAIDNSHELVVVLNKVDLPAAEPERVKEQIEDVIGIDTSEAVEISAKTGFGVPDVLEAIVRQLPPPHIGDVKNPLKVMLVDSWYDAYLGVIVLVRVIDGILKKGQIIRMMGTGVKYLVERVGVFTPKMVQVDTLGPGEIGFITASIKEVADTRVGDTITEERRPCENALPGFKPAQPVVFCGIFPIDAADFDGLRAAMGKLRLNDASFSFEMETSAALGFGFRCGFLGLLHLEIIQERLEREFNLDLIATAPSVVYRMNMNNGSVKELHNPADMPDLVKVSSIEEPWIRATIMTPDDYLGAILELCQERRGIQVGLSYVGTRAMVTYNLPLNEVVFDFYDRLKSISKGYASFDYQMTDYSEGDLVKMSILVNGESIDALSMLVHRTVAEKRGRSMCEKLKDLIPQHMFQIPIQAAIGGKIIARETIRALRKDVTAKCYGGDVTRKRKLLEKQKEGKKRMRQFGKVEIPQSAFIEALKMSK</sequence>
<proteinExistence type="inferred from homology"/>